<name>Y135_DEHMB</name>
<feature type="chain" id="PRO_1000082953" description="UPF0251 protein DehaBAV1_0135">
    <location>
        <begin position="1"/>
        <end position="117"/>
    </location>
</feature>
<protein>
    <recommendedName>
        <fullName evidence="1">UPF0251 protein DehaBAV1_0135</fullName>
    </recommendedName>
</protein>
<gene>
    <name type="ordered locus">DehaBAV1_0135</name>
</gene>
<reference key="1">
    <citation type="submission" date="2007-05" db="EMBL/GenBank/DDBJ databases">
        <title>Complete sequence of Dehalococcoides sp. BAV1.</title>
        <authorList>
            <consortium name="US DOE Joint Genome Institute"/>
            <person name="Copeland A."/>
            <person name="Lucas S."/>
            <person name="Lapidus A."/>
            <person name="Barry K."/>
            <person name="Detter J.C."/>
            <person name="Glavina del Rio T."/>
            <person name="Hammon N."/>
            <person name="Israni S."/>
            <person name="Pitluck S."/>
            <person name="Lowry S."/>
            <person name="Clum A."/>
            <person name="Schmutz J."/>
            <person name="Larimer F."/>
            <person name="Land M."/>
            <person name="Hauser L."/>
            <person name="Kyrpides N."/>
            <person name="Kim E."/>
            <person name="Ritalahti K.M."/>
            <person name="Loeffler F."/>
            <person name="Richardson P."/>
        </authorList>
    </citation>
    <scope>NUCLEOTIDE SEQUENCE [LARGE SCALE GENOMIC DNA]</scope>
    <source>
        <strain>ATCC BAA-2100 / JCM 16839 / KCTC 5957 / BAV1</strain>
    </source>
</reference>
<organism>
    <name type="scientific">Dehalococcoides mccartyi (strain ATCC BAA-2100 / JCM 16839 / KCTC 5957 / BAV1)</name>
    <dbReference type="NCBI Taxonomy" id="216389"/>
    <lineage>
        <taxon>Bacteria</taxon>
        <taxon>Bacillati</taxon>
        <taxon>Chloroflexota</taxon>
        <taxon>Dehalococcoidia</taxon>
        <taxon>Dehalococcoidales</taxon>
        <taxon>Dehalococcoidaceae</taxon>
        <taxon>Dehalococcoides</taxon>
    </lineage>
</organism>
<sequence length="117" mass="13223">MPRPYKCRRISEIPKVAYYKPAGIPLSMLEENQLSTEEAEALRLKDLLGLEQAQAALQMNISRPTFQRMLYSARYKVADALLNGKALRIEGGVFEIDARPCCQRQTPSCQPDPPKQT</sequence>
<dbReference type="EMBL" id="CP000688">
    <property type="protein sequence ID" value="ABQ16726.1"/>
    <property type="molecule type" value="Genomic_DNA"/>
</dbReference>
<dbReference type="KEGG" id="deb:DehaBAV1_0135"/>
<dbReference type="PATRIC" id="fig|216389.18.peg.154"/>
<dbReference type="HOGENOM" id="CLU_094511_1_0_0"/>
<dbReference type="Gene3D" id="1.10.10.10">
    <property type="entry name" value="Winged helix-like DNA-binding domain superfamily/Winged helix DNA-binding domain"/>
    <property type="match status" value="1"/>
</dbReference>
<dbReference type="HAMAP" id="MF_00674">
    <property type="entry name" value="UPF0251"/>
    <property type="match status" value="1"/>
</dbReference>
<dbReference type="InterPro" id="IPR013324">
    <property type="entry name" value="RNA_pol_sigma_r3/r4-like"/>
</dbReference>
<dbReference type="InterPro" id="IPR002852">
    <property type="entry name" value="UPF0251"/>
</dbReference>
<dbReference type="InterPro" id="IPR036388">
    <property type="entry name" value="WH-like_DNA-bd_sf"/>
</dbReference>
<dbReference type="PANTHER" id="PTHR37478">
    <property type="match status" value="1"/>
</dbReference>
<dbReference type="PANTHER" id="PTHR37478:SF2">
    <property type="entry name" value="UPF0251 PROTEIN TK0562"/>
    <property type="match status" value="1"/>
</dbReference>
<dbReference type="Pfam" id="PF02001">
    <property type="entry name" value="DUF134"/>
    <property type="match status" value="1"/>
</dbReference>
<dbReference type="SUPFAM" id="SSF88659">
    <property type="entry name" value="Sigma3 and sigma4 domains of RNA polymerase sigma factors"/>
    <property type="match status" value="1"/>
</dbReference>
<evidence type="ECO:0000255" key="1">
    <source>
        <dbReference type="HAMAP-Rule" id="MF_00674"/>
    </source>
</evidence>
<accession>A5FSQ2</accession>
<comment type="similarity">
    <text evidence="1">Belongs to the UPF0251 family.</text>
</comment>
<proteinExistence type="inferred from homology"/>